<sequence length="195" mass="21222">MNTLRIGLVSISDRASSGVYQDKGIPALEEWLTSALTTPFELETRLIPDEQAIIEQTLCELVDEMSCHLVLTTGGTGPARRDVTPDATLAVADREMPGFGEQMRQISLHFVPTAILSRQVGVIRKQALILNLPGQPKSIKETLEGVKDAEGNVVVHGIFASVPYCIQLLEGPYVETAPEVVAAFRPKSARRDVSE</sequence>
<protein>
    <recommendedName>
        <fullName>Molybdopterin adenylyltransferase</fullName>
        <shortName>MPT adenylyltransferase</shortName>
        <ecNumber>2.7.7.75</ecNumber>
    </recommendedName>
</protein>
<accession>P0AF04</accession>
<accession>P28694</accession>
<accession>Q8KMY3</accession>
<reference key="1">
    <citation type="journal article" date="2001" name="Nature">
        <title>Genome sequence of enterohaemorrhagic Escherichia coli O157:H7.</title>
        <authorList>
            <person name="Perna N.T."/>
            <person name="Plunkett G. III"/>
            <person name="Burland V."/>
            <person name="Mau B."/>
            <person name="Glasner J.D."/>
            <person name="Rose D.J."/>
            <person name="Mayhew G.F."/>
            <person name="Evans P.S."/>
            <person name="Gregor J."/>
            <person name="Kirkpatrick H.A."/>
            <person name="Posfai G."/>
            <person name="Hackett J."/>
            <person name="Klink S."/>
            <person name="Boutin A."/>
            <person name="Shao Y."/>
            <person name="Miller L."/>
            <person name="Grotbeck E.J."/>
            <person name="Davis N.W."/>
            <person name="Lim A."/>
            <person name="Dimalanta E.T."/>
            <person name="Potamousis K."/>
            <person name="Apodaca J."/>
            <person name="Anantharaman T.S."/>
            <person name="Lin J."/>
            <person name="Yen G."/>
            <person name="Schwartz D.C."/>
            <person name="Welch R.A."/>
            <person name="Blattner F.R."/>
        </authorList>
    </citation>
    <scope>NUCLEOTIDE SEQUENCE [LARGE SCALE GENOMIC DNA]</scope>
    <source>
        <strain>O157:H7 / EDL933 / ATCC 700927 / EHEC</strain>
    </source>
</reference>
<reference key="2">
    <citation type="journal article" date="2001" name="DNA Res.">
        <title>Complete genome sequence of enterohemorrhagic Escherichia coli O157:H7 and genomic comparison with a laboratory strain K-12.</title>
        <authorList>
            <person name="Hayashi T."/>
            <person name="Makino K."/>
            <person name="Ohnishi M."/>
            <person name="Kurokawa K."/>
            <person name="Ishii K."/>
            <person name="Yokoyama K."/>
            <person name="Han C.-G."/>
            <person name="Ohtsubo E."/>
            <person name="Nakayama K."/>
            <person name="Murata T."/>
            <person name="Tanaka M."/>
            <person name="Tobe T."/>
            <person name="Iida T."/>
            <person name="Takami H."/>
            <person name="Honda T."/>
            <person name="Sasakawa C."/>
            <person name="Ogasawara N."/>
            <person name="Yasunaga T."/>
            <person name="Kuhara S."/>
            <person name="Shiba T."/>
            <person name="Hattori M."/>
            <person name="Shinagawa H."/>
        </authorList>
    </citation>
    <scope>NUCLEOTIDE SEQUENCE [LARGE SCALE GENOMIC DNA]</scope>
    <source>
        <strain>O157:H7 / Sakai / RIMD 0509952 / EHEC</strain>
    </source>
</reference>
<gene>
    <name type="primary">mog</name>
    <name type="ordered locus">Z0009</name>
    <name type="ordered locus">ECs0009</name>
</gene>
<dbReference type="EC" id="2.7.7.75"/>
<dbReference type="EMBL" id="AE005174">
    <property type="protein sequence ID" value="AAG54309.1"/>
    <property type="molecule type" value="Genomic_DNA"/>
</dbReference>
<dbReference type="EMBL" id="BA000007">
    <property type="protein sequence ID" value="BAB33432.1"/>
    <property type="molecule type" value="Genomic_DNA"/>
</dbReference>
<dbReference type="PIR" id="A85481">
    <property type="entry name" value="A85481"/>
</dbReference>
<dbReference type="PIR" id="A90630">
    <property type="entry name" value="A90630"/>
</dbReference>
<dbReference type="RefSeq" id="NP_308036.1">
    <property type="nucleotide sequence ID" value="NC_002695.1"/>
</dbReference>
<dbReference type="RefSeq" id="WP_001295414.1">
    <property type="nucleotide sequence ID" value="NZ_VOAI01000002.1"/>
</dbReference>
<dbReference type="SMR" id="P0AF04"/>
<dbReference type="STRING" id="155864.Z0009"/>
<dbReference type="GeneID" id="75169908"/>
<dbReference type="GeneID" id="913401"/>
<dbReference type="KEGG" id="ece:Z0009"/>
<dbReference type="KEGG" id="ecs:ECs_0009"/>
<dbReference type="PATRIC" id="fig|386585.9.peg.106"/>
<dbReference type="eggNOG" id="COG0521">
    <property type="taxonomic scope" value="Bacteria"/>
</dbReference>
<dbReference type="HOGENOM" id="CLU_077358_1_0_6"/>
<dbReference type="OMA" id="PYIETNA"/>
<dbReference type="UniPathway" id="UPA00344"/>
<dbReference type="Proteomes" id="UP000000558">
    <property type="component" value="Chromosome"/>
</dbReference>
<dbReference type="Proteomes" id="UP000002519">
    <property type="component" value="Chromosome"/>
</dbReference>
<dbReference type="GO" id="GO:0005524">
    <property type="term" value="F:ATP binding"/>
    <property type="evidence" value="ECO:0007669"/>
    <property type="project" value="UniProtKB-KW"/>
</dbReference>
<dbReference type="GO" id="GO:0061598">
    <property type="term" value="F:molybdopterin adenylyltransferase activity"/>
    <property type="evidence" value="ECO:0007669"/>
    <property type="project" value="UniProtKB-EC"/>
</dbReference>
<dbReference type="GO" id="GO:0006777">
    <property type="term" value="P:Mo-molybdopterin cofactor biosynthetic process"/>
    <property type="evidence" value="ECO:0007669"/>
    <property type="project" value="UniProtKB-KW"/>
</dbReference>
<dbReference type="CDD" id="cd00886">
    <property type="entry name" value="MogA_MoaB"/>
    <property type="match status" value="1"/>
</dbReference>
<dbReference type="FunFam" id="3.40.980.10:FF:000005">
    <property type="entry name" value="Molybdopterin biosynthesis mog protein"/>
    <property type="match status" value="1"/>
</dbReference>
<dbReference type="Gene3D" id="3.40.980.10">
    <property type="entry name" value="MoaB/Mog-like domain"/>
    <property type="match status" value="1"/>
</dbReference>
<dbReference type="InterPro" id="IPR036425">
    <property type="entry name" value="MoaB/Mog-like_dom_sf"/>
</dbReference>
<dbReference type="InterPro" id="IPR001453">
    <property type="entry name" value="MoaB/Mog_dom"/>
</dbReference>
<dbReference type="InterPro" id="IPR008284">
    <property type="entry name" value="MoCF_biosynth_CS"/>
</dbReference>
<dbReference type="InterPro" id="IPR051920">
    <property type="entry name" value="MPT_Adenylyltrnsfr/MoaC-Rel"/>
</dbReference>
<dbReference type="NCBIfam" id="TIGR00177">
    <property type="entry name" value="molyb_syn"/>
    <property type="match status" value="1"/>
</dbReference>
<dbReference type="NCBIfam" id="NF006932">
    <property type="entry name" value="PRK09417.1"/>
    <property type="match status" value="1"/>
</dbReference>
<dbReference type="PANTHER" id="PTHR43764">
    <property type="entry name" value="MOLYBDENUM COFACTOR BIOSYNTHESIS"/>
    <property type="match status" value="1"/>
</dbReference>
<dbReference type="PANTHER" id="PTHR43764:SF1">
    <property type="entry name" value="MOLYBDOPTERIN MOLYBDOTRANSFERASE"/>
    <property type="match status" value="1"/>
</dbReference>
<dbReference type="Pfam" id="PF00994">
    <property type="entry name" value="MoCF_biosynth"/>
    <property type="match status" value="1"/>
</dbReference>
<dbReference type="SMART" id="SM00852">
    <property type="entry name" value="MoCF_biosynth"/>
    <property type="match status" value="1"/>
</dbReference>
<dbReference type="SUPFAM" id="SSF53218">
    <property type="entry name" value="Molybdenum cofactor biosynthesis proteins"/>
    <property type="match status" value="1"/>
</dbReference>
<dbReference type="PROSITE" id="PS01078">
    <property type="entry name" value="MOCF_BIOSYNTHESIS_1"/>
    <property type="match status" value="1"/>
</dbReference>
<name>MOG_ECO57</name>
<feature type="chain" id="PRO_0000170983" description="Molybdopterin adenylyltransferase">
    <location>
        <begin position="1"/>
        <end position="195"/>
    </location>
</feature>
<evidence type="ECO:0000250" key="1"/>
<evidence type="ECO:0000305" key="2"/>
<comment type="function">
    <text evidence="1">Catalyzes the adenylation of molybdopterin as part of the biosynthesis of the molybdenum-cofactor.</text>
</comment>
<comment type="catalytic activity">
    <reaction>
        <text>molybdopterin + ATP + H(+) = adenylyl-molybdopterin + diphosphate</text>
        <dbReference type="Rhea" id="RHEA:31331"/>
        <dbReference type="ChEBI" id="CHEBI:15378"/>
        <dbReference type="ChEBI" id="CHEBI:30616"/>
        <dbReference type="ChEBI" id="CHEBI:33019"/>
        <dbReference type="ChEBI" id="CHEBI:58698"/>
        <dbReference type="ChEBI" id="CHEBI:62727"/>
        <dbReference type="EC" id="2.7.7.75"/>
    </reaction>
</comment>
<comment type="pathway">
    <text>Cofactor biosynthesis; molybdopterin biosynthesis.</text>
</comment>
<comment type="similarity">
    <text evidence="2">Belongs to the MoaB/Mog family.</text>
</comment>
<keyword id="KW-0067">ATP-binding</keyword>
<keyword id="KW-0501">Molybdenum cofactor biosynthesis</keyword>
<keyword id="KW-0547">Nucleotide-binding</keyword>
<keyword id="KW-1185">Reference proteome</keyword>
<keyword id="KW-0808">Transferase</keyword>
<organism>
    <name type="scientific">Escherichia coli O157:H7</name>
    <dbReference type="NCBI Taxonomy" id="83334"/>
    <lineage>
        <taxon>Bacteria</taxon>
        <taxon>Pseudomonadati</taxon>
        <taxon>Pseudomonadota</taxon>
        <taxon>Gammaproteobacteria</taxon>
        <taxon>Enterobacterales</taxon>
        <taxon>Enterobacteriaceae</taxon>
        <taxon>Escherichia</taxon>
    </lineage>
</organism>
<proteinExistence type="inferred from homology"/>